<dbReference type="EC" id="6.1.1.4" evidence="1"/>
<dbReference type="EMBL" id="AJ965256">
    <property type="protein sequence ID" value="CAI82449.1"/>
    <property type="molecule type" value="Genomic_DNA"/>
</dbReference>
<dbReference type="RefSeq" id="WP_011308807.1">
    <property type="nucleotide sequence ID" value="NC_007356.1"/>
</dbReference>
<dbReference type="SMR" id="Q3ZWQ1"/>
<dbReference type="KEGG" id="deh:cbdbA202"/>
<dbReference type="HOGENOM" id="CLU_004427_0_0_0"/>
<dbReference type="Proteomes" id="UP000000433">
    <property type="component" value="Chromosome"/>
</dbReference>
<dbReference type="GO" id="GO:0005829">
    <property type="term" value="C:cytosol"/>
    <property type="evidence" value="ECO:0007669"/>
    <property type="project" value="TreeGrafter"/>
</dbReference>
<dbReference type="GO" id="GO:0002161">
    <property type="term" value="F:aminoacyl-tRNA deacylase activity"/>
    <property type="evidence" value="ECO:0007669"/>
    <property type="project" value="InterPro"/>
</dbReference>
<dbReference type="GO" id="GO:0005524">
    <property type="term" value="F:ATP binding"/>
    <property type="evidence" value="ECO:0007669"/>
    <property type="project" value="UniProtKB-UniRule"/>
</dbReference>
<dbReference type="GO" id="GO:0004823">
    <property type="term" value="F:leucine-tRNA ligase activity"/>
    <property type="evidence" value="ECO:0007669"/>
    <property type="project" value="UniProtKB-UniRule"/>
</dbReference>
<dbReference type="GO" id="GO:0006429">
    <property type="term" value="P:leucyl-tRNA aminoacylation"/>
    <property type="evidence" value="ECO:0007669"/>
    <property type="project" value="UniProtKB-UniRule"/>
</dbReference>
<dbReference type="CDD" id="cd07958">
    <property type="entry name" value="Anticodon_Ia_Leu_BEm"/>
    <property type="match status" value="1"/>
</dbReference>
<dbReference type="CDD" id="cd00812">
    <property type="entry name" value="LeuRS_core"/>
    <property type="match status" value="1"/>
</dbReference>
<dbReference type="FunFam" id="3.40.50.620:FF:000003">
    <property type="entry name" value="Leucine--tRNA ligase"/>
    <property type="match status" value="1"/>
</dbReference>
<dbReference type="FunFam" id="3.40.50.620:FF:000056">
    <property type="entry name" value="Leucine--tRNA ligase"/>
    <property type="match status" value="1"/>
</dbReference>
<dbReference type="FunFam" id="1.10.730.10:FF:000011">
    <property type="entry name" value="Leucine--tRNA ligase chloroplastic/mitochondrial"/>
    <property type="match status" value="1"/>
</dbReference>
<dbReference type="Gene3D" id="3.10.20.590">
    <property type="match status" value="1"/>
</dbReference>
<dbReference type="Gene3D" id="3.40.50.620">
    <property type="entry name" value="HUPs"/>
    <property type="match status" value="2"/>
</dbReference>
<dbReference type="Gene3D" id="1.10.730.10">
    <property type="entry name" value="Isoleucyl-tRNA Synthetase, Domain 1"/>
    <property type="match status" value="1"/>
</dbReference>
<dbReference type="HAMAP" id="MF_00049_B">
    <property type="entry name" value="Leu_tRNA_synth_B"/>
    <property type="match status" value="1"/>
</dbReference>
<dbReference type="InterPro" id="IPR002300">
    <property type="entry name" value="aa-tRNA-synth_Ia"/>
</dbReference>
<dbReference type="InterPro" id="IPR002302">
    <property type="entry name" value="Leu-tRNA-ligase"/>
</dbReference>
<dbReference type="InterPro" id="IPR025709">
    <property type="entry name" value="Leu_tRNA-synth_edit"/>
</dbReference>
<dbReference type="InterPro" id="IPR013155">
    <property type="entry name" value="M/V/L/I-tRNA-synth_anticd-bd"/>
</dbReference>
<dbReference type="InterPro" id="IPR015413">
    <property type="entry name" value="Methionyl/Leucyl_tRNA_Synth"/>
</dbReference>
<dbReference type="InterPro" id="IPR014729">
    <property type="entry name" value="Rossmann-like_a/b/a_fold"/>
</dbReference>
<dbReference type="InterPro" id="IPR009080">
    <property type="entry name" value="tRNAsynth_Ia_anticodon-bd"/>
</dbReference>
<dbReference type="InterPro" id="IPR009008">
    <property type="entry name" value="Val/Leu/Ile-tRNA-synth_edit"/>
</dbReference>
<dbReference type="NCBIfam" id="TIGR00396">
    <property type="entry name" value="leuS_bact"/>
    <property type="match status" value="1"/>
</dbReference>
<dbReference type="PANTHER" id="PTHR43740:SF2">
    <property type="entry name" value="LEUCINE--TRNA LIGASE, MITOCHONDRIAL"/>
    <property type="match status" value="1"/>
</dbReference>
<dbReference type="PANTHER" id="PTHR43740">
    <property type="entry name" value="LEUCYL-TRNA SYNTHETASE"/>
    <property type="match status" value="1"/>
</dbReference>
<dbReference type="Pfam" id="PF08264">
    <property type="entry name" value="Anticodon_1"/>
    <property type="match status" value="1"/>
</dbReference>
<dbReference type="Pfam" id="PF00133">
    <property type="entry name" value="tRNA-synt_1"/>
    <property type="match status" value="1"/>
</dbReference>
<dbReference type="Pfam" id="PF13603">
    <property type="entry name" value="tRNA-synt_1_2"/>
    <property type="match status" value="1"/>
</dbReference>
<dbReference type="Pfam" id="PF09334">
    <property type="entry name" value="tRNA-synt_1g"/>
    <property type="match status" value="1"/>
</dbReference>
<dbReference type="PRINTS" id="PR00985">
    <property type="entry name" value="TRNASYNTHLEU"/>
</dbReference>
<dbReference type="SUPFAM" id="SSF47323">
    <property type="entry name" value="Anticodon-binding domain of a subclass of class I aminoacyl-tRNA synthetases"/>
    <property type="match status" value="1"/>
</dbReference>
<dbReference type="SUPFAM" id="SSF52374">
    <property type="entry name" value="Nucleotidylyl transferase"/>
    <property type="match status" value="1"/>
</dbReference>
<dbReference type="SUPFAM" id="SSF50677">
    <property type="entry name" value="ValRS/IleRS/LeuRS editing domain"/>
    <property type="match status" value="1"/>
</dbReference>
<organism>
    <name type="scientific">Dehalococcoides mccartyi (strain CBDB1)</name>
    <dbReference type="NCBI Taxonomy" id="255470"/>
    <lineage>
        <taxon>Bacteria</taxon>
        <taxon>Bacillati</taxon>
        <taxon>Chloroflexota</taxon>
        <taxon>Dehalococcoidia</taxon>
        <taxon>Dehalococcoidales</taxon>
        <taxon>Dehalococcoidaceae</taxon>
        <taxon>Dehalococcoides</taxon>
    </lineage>
</organism>
<proteinExistence type="inferred from homology"/>
<protein>
    <recommendedName>
        <fullName evidence="1">Leucine--tRNA ligase</fullName>
        <ecNumber evidence="1">6.1.1.4</ecNumber>
    </recommendedName>
    <alternativeName>
        <fullName evidence="1">Leucyl-tRNA synthetase</fullName>
        <shortName evidence="1">LeuRS</shortName>
    </alternativeName>
</protein>
<reference key="1">
    <citation type="journal article" date="2005" name="Nat. Biotechnol.">
        <title>Genome sequence of the chlorinated compound-respiring bacterium Dehalococcoides species strain CBDB1.</title>
        <authorList>
            <person name="Kube M."/>
            <person name="Beck A."/>
            <person name="Zinder S.H."/>
            <person name="Kuhl H."/>
            <person name="Reinhardt R."/>
            <person name="Adrian L."/>
        </authorList>
    </citation>
    <scope>NUCLEOTIDE SEQUENCE [LARGE SCALE GENOMIC DNA]</scope>
    <source>
        <strain>CBDB1</strain>
    </source>
</reference>
<keyword id="KW-0030">Aminoacyl-tRNA synthetase</keyword>
<keyword id="KW-0067">ATP-binding</keyword>
<keyword id="KW-0963">Cytoplasm</keyword>
<keyword id="KW-0436">Ligase</keyword>
<keyword id="KW-0547">Nucleotide-binding</keyword>
<keyword id="KW-0648">Protein biosynthesis</keyword>
<feature type="chain" id="PRO_1000199194" description="Leucine--tRNA ligase">
    <location>
        <begin position="1"/>
        <end position="813"/>
    </location>
</feature>
<feature type="short sequence motif" description="'HIGH' region">
    <location>
        <begin position="42"/>
        <end position="52"/>
    </location>
</feature>
<feature type="short sequence motif" description="'KMSKS' region">
    <location>
        <begin position="580"/>
        <end position="584"/>
    </location>
</feature>
<feature type="binding site" evidence="1">
    <location>
        <position position="583"/>
    </location>
    <ligand>
        <name>ATP</name>
        <dbReference type="ChEBI" id="CHEBI:30616"/>
    </ligand>
</feature>
<sequence>MAEKYNPQETEKKWQDKWAADRLYHASEDSPKPKWYSLTMFPYTSGNLHIGHWYAEVPADCFARYKRLRGFNVMRPVGFDSFGLPAENAAIKHNIHPRIWTLNNVENMRRQLKTIGAMFDWDREVITCLPEYYKWTQWFFLKLYEAGLAYRAKAPVNWCPSCQAVLANEQVVDGTCWRCETPTTRRDLEQWFFRITNYADELKDHEGLDWPEKITAMQRNWVGKSYGAEVSFALDCPTAFEKEIKVFTTRPDTIYGVTFMVLAPEHPLVEKITTPENKAAVDAYIKKSRTCTEIERLSTEREKDGVFTGTYVTNRVNGQKVPVWIGDYVLQSYGTGAVMGVPAHDERDFVFAQKYHLPVITVIAPSEYDGKPLEVAYINEGVMLNSGPFNGTPNTEGKEKVCDYLAEHGWGKKTVNYKLRDWLISRQRYWGAPIPMVYCEKCGIVPVPEKDLPVLLPEDVEFRSGGESPLKYNEGFVNTICPVCGGKAKRETDTMDTFMCSSWYFLRYTSPGYDKGPFDPVKLKYWMPVDLYTGGAEHAVMHLFYSRFFTKALRDMGIIDFGEPFKKLFNQGIIVSNHQKMSKSKGNVVTPDNLVAEVGTDAVRAYLMFVGPWDQGGEWNDSGLSGMSRWLNRVWNLFTEEYTPQTASAEAERELKRTLHQTIKKITMDIERLRFNTVVAALMELSNSLAKLKETAAISAENWQNTLQTFALMLAPVAPHIAEELWANLGMKYSIHNQNWPTWDEELAKDEVITLIIQVNGKLRERLEMPAGISEAEAKETALNSERVKPHLLGKTPVTVIYVPGKLVNIVVK</sequence>
<comment type="catalytic activity">
    <reaction evidence="1">
        <text>tRNA(Leu) + L-leucine + ATP = L-leucyl-tRNA(Leu) + AMP + diphosphate</text>
        <dbReference type="Rhea" id="RHEA:11688"/>
        <dbReference type="Rhea" id="RHEA-COMP:9613"/>
        <dbReference type="Rhea" id="RHEA-COMP:9622"/>
        <dbReference type="ChEBI" id="CHEBI:30616"/>
        <dbReference type="ChEBI" id="CHEBI:33019"/>
        <dbReference type="ChEBI" id="CHEBI:57427"/>
        <dbReference type="ChEBI" id="CHEBI:78442"/>
        <dbReference type="ChEBI" id="CHEBI:78494"/>
        <dbReference type="ChEBI" id="CHEBI:456215"/>
        <dbReference type="EC" id="6.1.1.4"/>
    </reaction>
</comment>
<comment type="subcellular location">
    <subcellularLocation>
        <location evidence="1">Cytoplasm</location>
    </subcellularLocation>
</comment>
<comment type="similarity">
    <text evidence="1">Belongs to the class-I aminoacyl-tRNA synthetase family.</text>
</comment>
<gene>
    <name evidence="1" type="primary">leuS</name>
    <name type="ordered locus">cbdbA202</name>
</gene>
<accession>Q3ZWQ1</accession>
<name>SYL_DEHMC</name>
<evidence type="ECO:0000255" key="1">
    <source>
        <dbReference type="HAMAP-Rule" id="MF_00049"/>
    </source>
</evidence>